<evidence type="ECO:0000255" key="1">
    <source>
        <dbReference type="HAMAP-Rule" id="MF_01864"/>
    </source>
</evidence>
<evidence type="ECO:0000255" key="2">
    <source>
        <dbReference type="PROSITE-ProRule" id="PRU01266"/>
    </source>
</evidence>
<gene>
    <name evidence="1" type="primary">miaB</name>
    <name type="ordered locus">EFER_2441</name>
</gene>
<reference key="1">
    <citation type="journal article" date="2009" name="PLoS Genet.">
        <title>Organised genome dynamics in the Escherichia coli species results in highly diverse adaptive paths.</title>
        <authorList>
            <person name="Touchon M."/>
            <person name="Hoede C."/>
            <person name="Tenaillon O."/>
            <person name="Barbe V."/>
            <person name="Baeriswyl S."/>
            <person name="Bidet P."/>
            <person name="Bingen E."/>
            <person name="Bonacorsi S."/>
            <person name="Bouchier C."/>
            <person name="Bouvet O."/>
            <person name="Calteau A."/>
            <person name="Chiapello H."/>
            <person name="Clermont O."/>
            <person name="Cruveiller S."/>
            <person name="Danchin A."/>
            <person name="Diard M."/>
            <person name="Dossat C."/>
            <person name="Karoui M.E."/>
            <person name="Frapy E."/>
            <person name="Garry L."/>
            <person name="Ghigo J.M."/>
            <person name="Gilles A.M."/>
            <person name="Johnson J."/>
            <person name="Le Bouguenec C."/>
            <person name="Lescat M."/>
            <person name="Mangenot S."/>
            <person name="Martinez-Jehanne V."/>
            <person name="Matic I."/>
            <person name="Nassif X."/>
            <person name="Oztas S."/>
            <person name="Petit M.A."/>
            <person name="Pichon C."/>
            <person name="Rouy Z."/>
            <person name="Ruf C.S."/>
            <person name="Schneider D."/>
            <person name="Tourret J."/>
            <person name="Vacherie B."/>
            <person name="Vallenet D."/>
            <person name="Medigue C."/>
            <person name="Rocha E.P.C."/>
            <person name="Denamur E."/>
        </authorList>
    </citation>
    <scope>NUCLEOTIDE SEQUENCE [LARGE SCALE GENOMIC DNA]</scope>
    <source>
        <strain>ATCC 35469 / DSM 13698 / BCRC 15582 / CCUG 18766 / IAM 14443 / JCM 21226 / LMG 7866 / NBRC 102419 / NCTC 12128 / CDC 0568-73</strain>
    </source>
</reference>
<comment type="function">
    <text evidence="1">Catalyzes the methylthiolation of N6-(dimethylallyl)adenosine (i(6)A), leading to the formation of 2-methylthio-N6-(dimethylallyl)adenosine (ms(2)i(6)A) at position 37 in tRNAs that read codons beginning with uridine.</text>
</comment>
<comment type="catalytic activity">
    <reaction evidence="1">
        <text>N(6)-dimethylallyladenosine(37) in tRNA + (sulfur carrier)-SH + AH2 + 2 S-adenosyl-L-methionine = 2-methylsulfanyl-N(6)-dimethylallyladenosine(37) in tRNA + (sulfur carrier)-H + 5'-deoxyadenosine + L-methionine + A + S-adenosyl-L-homocysteine + 2 H(+)</text>
        <dbReference type="Rhea" id="RHEA:37067"/>
        <dbReference type="Rhea" id="RHEA-COMP:10375"/>
        <dbReference type="Rhea" id="RHEA-COMP:10376"/>
        <dbReference type="Rhea" id="RHEA-COMP:14737"/>
        <dbReference type="Rhea" id="RHEA-COMP:14739"/>
        <dbReference type="ChEBI" id="CHEBI:13193"/>
        <dbReference type="ChEBI" id="CHEBI:15378"/>
        <dbReference type="ChEBI" id="CHEBI:17319"/>
        <dbReference type="ChEBI" id="CHEBI:17499"/>
        <dbReference type="ChEBI" id="CHEBI:29917"/>
        <dbReference type="ChEBI" id="CHEBI:57844"/>
        <dbReference type="ChEBI" id="CHEBI:57856"/>
        <dbReference type="ChEBI" id="CHEBI:59789"/>
        <dbReference type="ChEBI" id="CHEBI:64428"/>
        <dbReference type="ChEBI" id="CHEBI:74415"/>
        <dbReference type="ChEBI" id="CHEBI:74417"/>
        <dbReference type="EC" id="2.8.4.3"/>
    </reaction>
</comment>
<comment type="cofactor">
    <cofactor evidence="1">
        <name>[4Fe-4S] cluster</name>
        <dbReference type="ChEBI" id="CHEBI:49883"/>
    </cofactor>
    <text evidence="1">Binds 2 [4Fe-4S] clusters. One cluster is coordinated with 3 cysteines and an exchangeable S-adenosyl-L-methionine.</text>
</comment>
<comment type="subunit">
    <text evidence="1">Monomer.</text>
</comment>
<comment type="subcellular location">
    <subcellularLocation>
        <location evidence="1">Cytoplasm</location>
    </subcellularLocation>
</comment>
<comment type="similarity">
    <text evidence="1">Belongs to the methylthiotransferase family. MiaB subfamily.</text>
</comment>
<accession>B7LKU3</accession>
<name>MIAB_ESCF3</name>
<sequence>MTKKLHIKTWGCQMNEYDSSKMADLLDATHGYQLTDVAEEADVLLLNTCSIREKAQEKVFHQLGRWKLLKEKNPDLIIGVGGCVASQEGEHIRQRAHYVDIIFGPQTLHRLPEMINSVRGDRSPVVDISFPEIEKFDRLPEPRAEGPTAFVSIMEGCNKYCTYCVVPYTRGEEVSRPSDDILFEIAQLAAQGVREVNLLGQNVNAWRGENYDGTTGSFADLLRLVAAIDGIDRIRFTTSHPIEFTDDIIEVYRDTPELVSFLHLPVQSGSDRILNLMGRTHTALEYKAIIRKLRAARPDIQISSDFIVGFPGETTEDFEKTMKLIADVNFDMSYSFIFSARPGTPAADMVDDVPEEEKKQRLYILQERINQQAMAWSRRMLGTTQRILVEGTSRKSIMELSGRTENNRVVNFEGTPDMIGKFVDVEITDVYPNSLRGKVVRTEDEMGLRVAETPESVIARTRKENDLGVGYYQP</sequence>
<keyword id="KW-0004">4Fe-4S</keyword>
<keyword id="KW-0963">Cytoplasm</keyword>
<keyword id="KW-0408">Iron</keyword>
<keyword id="KW-0411">Iron-sulfur</keyword>
<keyword id="KW-0479">Metal-binding</keyword>
<keyword id="KW-0949">S-adenosyl-L-methionine</keyword>
<keyword id="KW-0808">Transferase</keyword>
<keyword id="KW-0819">tRNA processing</keyword>
<protein>
    <recommendedName>
        <fullName evidence="1">tRNA-2-methylthio-N(6)-dimethylallyladenosine synthase</fullName>
        <ecNumber evidence="1">2.8.4.3</ecNumber>
    </recommendedName>
    <alternativeName>
        <fullName evidence="1">(Dimethylallyl)adenosine tRNA methylthiotransferase MiaB</fullName>
    </alternativeName>
    <alternativeName>
        <fullName evidence="1">tRNA-i(6)A37 methylthiotransferase</fullName>
    </alternativeName>
</protein>
<feature type="chain" id="PRO_0000374297" description="tRNA-2-methylthio-N(6)-dimethylallyladenosine synthase">
    <location>
        <begin position="1"/>
        <end position="474"/>
    </location>
</feature>
<feature type="domain" description="MTTase N-terminal" evidence="1">
    <location>
        <begin position="3"/>
        <end position="120"/>
    </location>
</feature>
<feature type="domain" description="Radical SAM core" evidence="2">
    <location>
        <begin position="143"/>
        <end position="375"/>
    </location>
</feature>
<feature type="domain" description="TRAM" evidence="1">
    <location>
        <begin position="378"/>
        <end position="441"/>
    </location>
</feature>
<feature type="binding site" evidence="1">
    <location>
        <position position="12"/>
    </location>
    <ligand>
        <name>[4Fe-4S] cluster</name>
        <dbReference type="ChEBI" id="CHEBI:49883"/>
        <label>1</label>
    </ligand>
</feature>
<feature type="binding site" evidence="1">
    <location>
        <position position="49"/>
    </location>
    <ligand>
        <name>[4Fe-4S] cluster</name>
        <dbReference type="ChEBI" id="CHEBI:49883"/>
        <label>1</label>
    </ligand>
</feature>
<feature type="binding site" evidence="1">
    <location>
        <position position="83"/>
    </location>
    <ligand>
        <name>[4Fe-4S] cluster</name>
        <dbReference type="ChEBI" id="CHEBI:49883"/>
        <label>1</label>
    </ligand>
</feature>
<feature type="binding site" evidence="1">
    <location>
        <position position="157"/>
    </location>
    <ligand>
        <name>[4Fe-4S] cluster</name>
        <dbReference type="ChEBI" id="CHEBI:49883"/>
        <label>2</label>
        <note>4Fe-4S-S-AdoMet</note>
    </ligand>
</feature>
<feature type="binding site" evidence="1">
    <location>
        <position position="161"/>
    </location>
    <ligand>
        <name>[4Fe-4S] cluster</name>
        <dbReference type="ChEBI" id="CHEBI:49883"/>
        <label>2</label>
        <note>4Fe-4S-S-AdoMet</note>
    </ligand>
</feature>
<feature type="binding site" evidence="1">
    <location>
        <position position="164"/>
    </location>
    <ligand>
        <name>[4Fe-4S] cluster</name>
        <dbReference type="ChEBI" id="CHEBI:49883"/>
        <label>2</label>
        <note>4Fe-4S-S-AdoMet</note>
    </ligand>
</feature>
<proteinExistence type="inferred from homology"/>
<organism>
    <name type="scientific">Escherichia fergusonii (strain ATCC 35469 / DSM 13698 / CCUG 18766 / IAM 14443 / JCM 21226 / LMG 7866 / NBRC 102419 / NCTC 12128 / CDC 0568-73)</name>
    <dbReference type="NCBI Taxonomy" id="585054"/>
    <lineage>
        <taxon>Bacteria</taxon>
        <taxon>Pseudomonadati</taxon>
        <taxon>Pseudomonadota</taxon>
        <taxon>Gammaproteobacteria</taxon>
        <taxon>Enterobacterales</taxon>
        <taxon>Enterobacteriaceae</taxon>
        <taxon>Escherichia</taxon>
    </lineage>
</organism>
<dbReference type="EC" id="2.8.4.3" evidence="1"/>
<dbReference type="EMBL" id="CU928158">
    <property type="protein sequence ID" value="CAQ89938.1"/>
    <property type="molecule type" value="Genomic_DNA"/>
</dbReference>
<dbReference type="RefSeq" id="WP_000162740.1">
    <property type="nucleotide sequence ID" value="NC_011740.1"/>
</dbReference>
<dbReference type="SMR" id="B7LKU3"/>
<dbReference type="GeneID" id="86863171"/>
<dbReference type="KEGG" id="efe:EFER_2441"/>
<dbReference type="HOGENOM" id="CLU_018697_2_0_6"/>
<dbReference type="OrthoDB" id="9805215at2"/>
<dbReference type="Proteomes" id="UP000000745">
    <property type="component" value="Chromosome"/>
</dbReference>
<dbReference type="GO" id="GO:0005829">
    <property type="term" value="C:cytosol"/>
    <property type="evidence" value="ECO:0007669"/>
    <property type="project" value="TreeGrafter"/>
</dbReference>
<dbReference type="GO" id="GO:0051539">
    <property type="term" value="F:4 iron, 4 sulfur cluster binding"/>
    <property type="evidence" value="ECO:0007669"/>
    <property type="project" value="UniProtKB-UniRule"/>
</dbReference>
<dbReference type="GO" id="GO:0046872">
    <property type="term" value="F:metal ion binding"/>
    <property type="evidence" value="ECO:0007669"/>
    <property type="project" value="UniProtKB-KW"/>
</dbReference>
<dbReference type="GO" id="GO:0035597">
    <property type="term" value="F:N6-isopentenyladenosine methylthiotransferase activity"/>
    <property type="evidence" value="ECO:0007669"/>
    <property type="project" value="TreeGrafter"/>
</dbReference>
<dbReference type="CDD" id="cd01335">
    <property type="entry name" value="Radical_SAM"/>
    <property type="match status" value="1"/>
</dbReference>
<dbReference type="FunFam" id="3.40.50.12160:FF:000001">
    <property type="entry name" value="tRNA-2-methylthio-N(6)-dimethylallyladenosine synthase"/>
    <property type="match status" value="1"/>
</dbReference>
<dbReference type="FunFam" id="3.80.30.20:FF:000001">
    <property type="entry name" value="tRNA-2-methylthio-N(6)-dimethylallyladenosine synthase 2"/>
    <property type="match status" value="1"/>
</dbReference>
<dbReference type="Gene3D" id="3.40.50.12160">
    <property type="entry name" value="Methylthiotransferase, N-terminal domain"/>
    <property type="match status" value="1"/>
</dbReference>
<dbReference type="Gene3D" id="3.80.30.20">
    <property type="entry name" value="tm_1862 like domain"/>
    <property type="match status" value="1"/>
</dbReference>
<dbReference type="HAMAP" id="MF_01864">
    <property type="entry name" value="tRNA_metthiotr_MiaB"/>
    <property type="match status" value="1"/>
</dbReference>
<dbReference type="InterPro" id="IPR006638">
    <property type="entry name" value="Elp3/MiaA/NifB-like_rSAM"/>
</dbReference>
<dbReference type="InterPro" id="IPR005839">
    <property type="entry name" value="Methylthiotransferase"/>
</dbReference>
<dbReference type="InterPro" id="IPR020612">
    <property type="entry name" value="Methylthiotransferase_CS"/>
</dbReference>
<dbReference type="InterPro" id="IPR013848">
    <property type="entry name" value="Methylthiotransferase_N"/>
</dbReference>
<dbReference type="InterPro" id="IPR038135">
    <property type="entry name" value="Methylthiotransferase_N_sf"/>
</dbReference>
<dbReference type="InterPro" id="IPR006463">
    <property type="entry name" value="MiaB_methiolase"/>
</dbReference>
<dbReference type="InterPro" id="IPR007197">
    <property type="entry name" value="rSAM"/>
</dbReference>
<dbReference type="InterPro" id="IPR023404">
    <property type="entry name" value="rSAM_horseshoe"/>
</dbReference>
<dbReference type="InterPro" id="IPR002792">
    <property type="entry name" value="TRAM_dom"/>
</dbReference>
<dbReference type="NCBIfam" id="TIGR01574">
    <property type="entry name" value="miaB-methiolase"/>
    <property type="match status" value="1"/>
</dbReference>
<dbReference type="NCBIfam" id="TIGR00089">
    <property type="entry name" value="MiaB/RimO family radical SAM methylthiotransferase"/>
    <property type="match status" value="1"/>
</dbReference>
<dbReference type="PANTHER" id="PTHR43020">
    <property type="entry name" value="CDK5 REGULATORY SUBUNIT-ASSOCIATED PROTEIN 1"/>
    <property type="match status" value="1"/>
</dbReference>
<dbReference type="PANTHER" id="PTHR43020:SF2">
    <property type="entry name" value="MITOCHONDRIAL TRNA METHYLTHIOTRANSFERASE CDK5RAP1"/>
    <property type="match status" value="1"/>
</dbReference>
<dbReference type="Pfam" id="PF04055">
    <property type="entry name" value="Radical_SAM"/>
    <property type="match status" value="1"/>
</dbReference>
<dbReference type="Pfam" id="PF01938">
    <property type="entry name" value="TRAM"/>
    <property type="match status" value="1"/>
</dbReference>
<dbReference type="Pfam" id="PF00919">
    <property type="entry name" value="UPF0004"/>
    <property type="match status" value="1"/>
</dbReference>
<dbReference type="SFLD" id="SFLDF00273">
    <property type="entry name" value="(dimethylallyl)adenosine_tRNA"/>
    <property type="match status" value="1"/>
</dbReference>
<dbReference type="SFLD" id="SFLDG01082">
    <property type="entry name" value="B12-binding_domain_containing"/>
    <property type="match status" value="1"/>
</dbReference>
<dbReference type="SFLD" id="SFLDS00029">
    <property type="entry name" value="Radical_SAM"/>
    <property type="match status" value="1"/>
</dbReference>
<dbReference type="SMART" id="SM00729">
    <property type="entry name" value="Elp3"/>
    <property type="match status" value="1"/>
</dbReference>
<dbReference type="SUPFAM" id="SSF102114">
    <property type="entry name" value="Radical SAM enzymes"/>
    <property type="match status" value="1"/>
</dbReference>
<dbReference type="PROSITE" id="PS51449">
    <property type="entry name" value="MTTASE_N"/>
    <property type="match status" value="1"/>
</dbReference>
<dbReference type="PROSITE" id="PS01278">
    <property type="entry name" value="MTTASE_RADICAL"/>
    <property type="match status" value="1"/>
</dbReference>
<dbReference type="PROSITE" id="PS51918">
    <property type="entry name" value="RADICAL_SAM"/>
    <property type="match status" value="1"/>
</dbReference>
<dbReference type="PROSITE" id="PS50926">
    <property type="entry name" value="TRAM"/>
    <property type="match status" value="1"/>
</dbReference>